<name>RL25_RHOJR</name>
<organism>
    <name type="scientific">Rhodococcus jostii (strain RHA1)</name>
    <dbReference type="NCBI Taxonomy" id="101510"/>
    <lineage>
        <taxon>Bacteria</taxon>
        <taxon>Bacillati</taxon>
        <taxon>Actinomycetota</taxon>
        <taxon>Actinomycetes</taxon>
        <taxon>Mycobacteriales</taxon>
        <taxon>Nocardiaceae</taxon>
        <taxon>Rhodococcus</taxon>
    </lineage>
</organism>
<feature type="chain" id="PRO_1000052929" description="Large ribosomal subunit protein bL25">
    <location>
        <begin position="1"/>
        <end position="207"/>
    </location>
</feature>
<feature type="region of interest" description="Disordered" evidence="2">
    <location>
        <begin position="185"/>
        <end position="207"/>
    </location>
</feature>
<accession>Q0S4R2</accession>
<gene>
    <name evidence="1" type="primary">rplY</name>
    <name evidence="1" type="synonym">ctc</name>
    <name type="ordered locus">RHA1_ro05695</name>
</gene>
<dbReference type="EMBL" id="CP000431">
    <property type="protein sequence ID" value="ABG97474.1"/>
    <property type="molecule type" value="Genomic_DNA"/>
</dbReference>
<dbReference type="RefSeq" id="WP_009478948.1">
    <property type="nucleotide sequence ID" value="NC_008268.1"/>
</dbReference>
<dbReference type="SMR" id="Q0S4R2"/>
<dbReference type="KEGG" id="rha:RHA1_ro05695"/>
<dbReference type="eggNOG" id="COG1825">
    <property type="taxonomic scope" value="Bacteria"/>
</dbReference>
<dbReference type="HOGENOM" id="CLU_075939_1_0_11"/>
<dbReference type="OrthoDB" id="5242980at2"/>
<dbReference type="Proteomes" id="UP000008710">
    <property type="component" value="Chromosome"/>
</dbReference>
<dbReference type="GO" id="GO:0022625">
    <property type="term" value="C:cytosolic large ribosomal subunit"/>
    <property type="evidence" value="ECO:0007669"/>
    <property type="project" value="TreeGrafter"/>
</dbReference>
<dbReference type="GO" id="GO:0008097">
    <property type="term" value="F:5S rRNA binding"/>
    <property type="evidence" value="ECO:0007669"/>
    <property type="project" value="InterPro"/>
</dbReference>
<dbReference type="GO" id="GO:0003735">
    <property type="term" value="F:structural constituent of ribosome"/>
    <property type="evidence" value="ECO:0007669"/>
    <property type="project" value="InterPro"/>
</dbReference>
<dbReference type="GO" id="GO:0006412">
    <property type="term" value="P:translation"/>
    <property type="evidence" value="ECO:0007669"/>
    <property type="project" value="UniProtKB-UniRule"/>
</dbReference>
<dbReference type="CDD" id="cd00495">
    <property type="entry name" value="Ribosomal_L25_TL5_CTC"/>
    <property type="match status" value="1"/>
</dbReference>
<dbReference type="Gene3D" id="2.170.120.20">
    <property type="entry name" value="Ribosomal protein L25, beta domain"/>
    <property type="match status" value="1"/>
</dbReference>
<dbReference type="Gene3D" id="2.40.240.10">
    <property type="entry name" value="Ribosomal Protein L25, Chain P"/>
    <property type="match status" value="1"/>
</dbReference>
<dbReference type="HAMAP" id="MF_01334">
    <property type="entry name" value="Ribosomal_bL25_CTC"/>
    <property type="match status" value="1"/>
</dbReference>
<dbReference type="InterPro" id="IPR020056">
    <property type="entry name" value="Rbsml_bL25/Gln-tRNA_synth_N"/>
</dbReference>
<dbReference type="InterPro" id="IPR011035">
    <property type="entry name" value="Ribosomal_bL25/Gln-tRNA_synth"/>
</dbReference>
<dbReference type="InterPro" id="IPR020057">
    <property type="entry name" value="Ribosomal_bL25_b-dom"/>
</dbReference>
<dbReference type="InterPro" id="IPR037121">
    <property type="entry name" value="Ribosomal_bL25_C"/>
</dbReference>
<dbReference type="InterPro" id="IPR001021">
    <property type="entry name" value="Ribosomal_bL25_long"/>
</dbReference>
<dbReference type="InterPro" id="IPR029751">
    <property type="entry name" value="Ribosomal_L25_dom"/>
</dbReference>
<dbReference type="InterPro" id="IPR020930">
    <property type="entry name" value="Ribosomal_uL5_bac-type"/>
</dbReference>
<dbReference type="InterPro" id="IPR004029">
    <property type="entry name" value="UreE_N"/>
</dbReference>
<dbReference type="NCBIfam" id="TIGR00731">
    <property type="entry name" value="bL25_bact_ctc"/>
    <property type="match status" value="1"/>
</dbReference>
<dbReference type="NCBIfam" id="NF004131">
    <property type="entry name" value="PRK05618.2-1"/>
    <property type="match status" value="1"/>
</dbReference>
<dbReference type="PANTHER" id="PTHR33284">
    <property type="entry name" value="RIBOSOMAL PROTEIN L25/GLN-TRNA SYNTHETASE, ANTI-CODON-BINDING DOMAIN-CONTAINING PROTEIN"/>
    <property type="match status" value="1"/>
</dbReference>
<dbReference type="PANTHER" id="PTHR33284:SF1">
    <property type="entry name" value="RIBOSOMAL PROTEIN L25_GLN-TRNA SYNTHETASE, ANTI-CODON-BINDING DOMAIN-CONTAINING PROTEIN"/>
    <property type="match status" value="1"/>
</dbReference>
<dbReference type="Pfam" id="PF01386">
    <property type="entry name" value="Ribosomal_L25p"/>
    <property type="match status" value="1"/>
</dbReference>
<dbReference type="Pfam" id="PF14693">
    <property type="entry name" value="Ribosomal_TL5_C"/>
    <property type="match status" value="1"/>
</dbReference>
<dbReference type="SMART" id="SM00988">
    <property type="entry name" value="UreE_N"/>
    <property type="match status" value="1"/>
</dbReference>
<dbReference type="SUPFAM" id="SSF50715">
    <property type="entry name" value="Ribosomal protein L25-like"/>
    <property type="match status" value="1"/>
</dbReference>
<comment type="function">
    <text evidence="1">This is one of the proteins that binds to the 5S RNA in the ribosome where it forms part of the central protuberance.</text>
</comment>
<comment type="subunit">
    <text evidence="1">Part of the 50S ribosomal subunit; part of the 5S rRNA/L5/L18/L25 subcomplex. Contacts the 5S rRNA. Binds to the 5S rRNA independently of L5 and L18.</text>
</comment>
<comment type="similarity">
    <text evidence="1">Belongs to the bacterial ribosomal protein bL25 family. CTC subfamily.</text>
</comment>
<sequence>MSDENRLVAAVRTEFGKGAARRARRDGQVPAVLYGHGEDPRHLNVPSRDFAAILRAHGTNAILTLDIEGKEQVALTKSVVVHPIRNYIEHADLLVIKKGEKVTVDVPVVVTGEAAAGTLVAQDAATISLEADALHIPEQIEVSVEGLEVGTQILANQLELPKGSTLQADEELLIVNVVAAPTAADLEEETGEAAAEAEAPAEEGAES</sequence>
<protein>
    <recommendedName>
        <fullName evidence="1">Large ribosomal subunit protein bL25</fullName>
    </recommendedName>
    <alternativeName>
        <fullName evidence="3">50S ribosomal protein L25</fullName>
    </alternativeName>
    <alternativeName>
        <fullName evidence="1">General stress protein CTC</fullName>
    </alternativeName>
</protein>
<reference key="1">
    <citation type="journal article" date="2006" name="Proc. Natl. Acad. Sci. U.S.A.">
        <title>The complete genome of Rhodococcus sp. RHA1 provides insights into a catabolic powerhouse.</title>
        <authorList>
            <person name="McLeod M.P."/>
            <person name="Warren R.L."/>
            <person name="Hsiao W.W.L."/>
            <person name="Araki N."/>
            <person name="Myhre M."/>
            <person name="Fernandes C."/>
            <person name="Miyazawa D."/>
            <person name="Wong W."/>
            <person name="Lillquist A.L."/>
            <person name="Wang D."/>
            <person name="Dosanjh M."/>
            <person name="Hara H."/>
            <person name="Petrescu A."/>
            <person name="Morin R.D."/>
            <person name="Yang G."/>
            <person name="Stott J.M."/>
            <person name="Schein J.E."/>
            <person name="Shin H."/>
            <person name="Smailus D."/>
            <person name="Siddiqui A.S."/>
            <person name="Marra M.A."/>
            <person name="Jones S.J.M."/>
            <person name="Holt R."/>
            <person name="Brinkman F.S.L."/>
            <person name="Miyauchi K."/>
            <person name="Fukuda M."/>
            <person name="Davies J.E."/>
            <person name="Mohn W.W."/>
            <person name="Eltis L.D."/>
        </authorList>
    </citation>
    <scope>NUCLEOTIDE SEQUENCE [LARGE SCALE GENOMIC DNA]</scope>
    <source>
        <strain>RHA1</strain>
    </source>
</reference>
<evidence type="ECO:0000255" key="1">
    <source>
        <dbReference type="HAMAP-Rule" id="MF_01334"/>
    </source>
</evidence>
<evidence type="ECO:0000256" key="2">
    <source>
        <dbReference type="SAM" id="MobiDB-lite"/>
    </source>
</evidence>
<evidence type="ECO:0000305" key="3"/>
<proteinExistence type="inferred from homology"/>
<keyword id="KW-0687">Ribonucleoprotein</keyword>
<keyword id="KW-0689">Ribosomal protein</keyword>
<keyword id="KW-0694">RNA-binding</keyword>
<keyword id="KW-0699">rRNA-binding</keyword>